<feature type="signal peptide" evidence="1">
    <location>
        <begin position="1"/>
        <end position="34"/>
    </location>
</feature>
<feature type="chain" id="PRO_0000014913" description="Pregnancy-specific beta-1-glycoprotein 6">
    <location>
        <begin position="35"/>
        <end position="435"/>
    </location>
</feature>
<feature type="domain" description="Ig-like V-type">
    <location>
        <begin position="35"/>
        <end position="143"/>
    </location>
</feature>
<feature type="domain" description="Ig-like C2-type 1">
    <location>
        <begin position="148"/>
        <end position="233"/>
    </location>
</feature>
<feature type="domain" description="Ig-like C2-type 2">
    <location>
        <begin position="241"/>
        <end position="326"/>
    </location>
</feature>
<feature type="domain" description="Ig-like C2-type 3">
    <location>
        <begin position="334"/>
        <end position="405"/>
    </location>
</feature>
<feature type="short sequence motif" description="Cell attachment site" evidence="1">
    <location>
        <begin position="126"/>
        <end position="128"/>
    </location>
</feature>
<feature type="glycosylation site" description="N-linked (GlcNAc...) asparagine" evidence="1">
    <location>
        <position position="61"/>
    </location>
</feature>
<feature type="glycosylation site" description="N-linked (GlcNAc...) asparagine" evidence="1">
    <location>
        <position position="103"/>
    </location>
</feature>
<feature type="glycosylation site" description="N-linked (GlcNAc...) asparagine" evidence="1">
    <location>
        <position position="110"/>
    </location>
</feature>
<feature type="glycosylation site" description="N-linked (GlcNAc...) asparagine" evidence="1">
    <location>
        <position position="198"/>
    </location>
</feature>
<feature type="glycosylation site" description="N-linked (GlcNAc...) asparagine" evidence="1">
    <location>
        <position position="267"/>
    </location>
</feature>
<feature type="glycosylation site" description="N-linked (GlcNAc...) asparagine" evidence="1">
    <location>
        <position position="302"/>
    </location>
</feature>
<feature type="glycosylation site" description="N-linked (GlcNAc...) asparagine" evidence="1">
    <location>
        <position position="386"/>
    </location>
</feature>
<feature type="disulfide bond" evidence="7">
    <location>
        <begin position="168"/>
        <end position="216"/>
    </location>
</feature>
<feature type="disulfide bond" evidence="7">
    <location>
        <begin position="261"/>
        <end position="309"/>
    </location>
</feature>
<feature type="disulfide bond" evidence="7">
    <location>
        <begin position="353"/>
        <end position="393"/>
    </location>
</feature>
<feature type="splice variant" id="VSP_039344" description="In isoform 2." evidence="4 5 6">
    <original>ETASPQVTYAGPNTWFQEILLL</original>
    <variation>GPCHGNQTESH</variation>
    <location>
        <begin position="414"/>
        <end position="435"/>
    </location>
</feature>
<feature type="sequence variant" id="VAR_049922" description="In dbSNP:rs3198831." evidence="2 3">
    <original>H</original>
    <variation>D</variation>
    <location>
        <position position="85"/>
    </location>
</feature>
<feature type="sequence variant" id="VAR_011723" description="In dbSNP:rs1058674.">
    <original>L</original>
    <variation>F</variation>
    <location>
        <position position="155"/>
    </location>
</feature>
<feature type="sequence variant" id="VAR_049923" description="In dbSNP:rs1058679.">
    <original>M</original>
    <variation>T</variation>
    <location>
        <position position="161"/>
    </location>
</feature>
<feature type="sequence variant" id="VAR_011724" description="In dbSNP:rs1058680.">
    <original>R</original>
    <variation>L</variation>
    <location>
        <position position="165"/>
    </location>
</feature>
<feature type="sequence variant" id="VAR_011725" description="In dbSNP:rs1065505.">
    <original>I</original>
    <variation>T</variation>
    <location>
        <position position="167"/>
    </location>
</feature>
<feature type="sequence variant" id="VAR_011726" description="In dbSNP:rs1065507.">
    <original>L</original>
    <variation>W</variation>
    <location>
        <position position="180"/>
    </location>
</feature>
<feature type="sequence variant" id="VAR_011727" description="In dbSNP:rs1065508.">
    <original>L</original>
    <variation>M</variation>
    <location>
        <position position="181"/>
    </location>
</feature>
<feature type="sequence variant" id="VAR_011728" description="In dbSNP:rs1065509.">
    <original>N</original>
    <variation>S</variation>
    <location>
        <position position="185"/>
    </location>
</feature>
<feature type="sequence variant" id="VAR_061324" description="In dbSNP:rs59587483.">
    <original>M</original>
    <variation>R</variation>
    <location>
        <position position="188"/>
    </location>
</feature>
<feature type="sequence variant" id="VAR_011729" description="In dbSNP:rs1058688.">
    <original>R</original>
    <variation>S</variation>
    <location>
        <position position="191"/>
    </location>
</feature>
<feature type="sequence variant" id="VAR_011730" description="In dbSNP:rs1065511.">
    <original>K</original>
    <variation>E</variation>
    <location>
        <position position="196"/>
    </location>
</feature>
<feature type="sequence variant" id="VAR_011731" description="In dbSNP:rs1065513.">
    <original>K</original>
    <variation>N</variation>
    <location>
        <position position="253"/>
    </location>
</feature>
<feature type="sequence variant" id="VAR_011732" description="In dbSNP:rs1058710.">
    <original>L</original>
    <variation>S</variation>
    <location>
        <position position="257"/>
    </location>
</feature>
<feature type="sequence variant" id="VAR_011733" description="In dbSNP:rs1065515.">
    <original>A</original>
    <variation>T</variation>
    <location>
        <position position="258"/>
    </location>
</feature>
<feature type="sequence variant" id="VAR_011735" description="In dbSNP:rs1065525.">
    <original>I</original>
    <variation>S</variation>
    <location>
        <position position="404"/>
    </location>
</feature>
<feature type="sequence conflict" description="In Ref. 3; CAA34957." evidence="7" ref="3">
    <original>K</original>
    <variation>Q</variation>
    <location>
        <position position="41"/>
    </location>
</feature>
<feature type="sequence conflict" description="In Ref. 3; CAA34957." evidence="7" ref="3">
    <original>P</original>
    <variation>R</variation>
    <location>
        <position position="148"/>
    </location>
</feature>
<feature type="sequence conflict" description="In Ref. 3; CAA34957." evidence="7" ref="3">
    <original>NP</original>
    <variation>RG</variation>
    <location>
        <begin position="220"/>
        <end position="221"/>
    </location>
</feature>
<feature type="sequence conflict" description="In Ref. 3; CAA34957." evidence="7" ref="3">
    <original>S</original>
    <variation>Y</variation>
    <location>
        <position position="339"/>
    </location>
</feature>
<feature type="sequence conflict" description="In Ref. 2; AAA36512 and 3; CAA34957." evidence="7" ref="2 3">
    <original>S</original>
    <variation>F</variation>
    <location>
        <position position="364"/>
    </location>
</feature>
<protein>
    <recommendedName>
        <fullName>Pregnancy-specific beta-1-glycoprotein 6</fullName>
        <shortName>PS-beta-G-6</shortName>
        <shortName>PSBG-6</shortName>
        <shortName>Pregnancy-specific glycoprotein 6</shortName>
    </recommendedName>
    <alternativeName>
        <fullName>Pregnancy-specific beta-1-glycoprotein 10</fullName>
        <shortName>PS-beta-G-10</shortName>
        <shortName>PSBG-10</shortName>
        <shortName>Pregnancy-specific glycoprotein 10</shortName>
    </alternativeName>
    <alternativeName>
        <fullName>Pregnancy-specific beta-1-glycoprotein 12</fullName>
        <shortName>PS-beta-G-12</shortName>
        <shortName>PSBG-12</shortName>
        <shortName>Pregnancy-specific glycoprotein 12</shortName>
    </alternativeName>
</protein>
<sequence length="435" mass="48814">MGPLSAPPCTQHITWKGLLLTASLLNFWNLPTTAQVIIEAKPPKVSEGKDVLLLVHNLPQNLTGYIWYKGQMTDLYHYITSYVVHGQIIYGPAYSGRETVYSNASLLIQNVTQEDAGSYTLHIIKRGDGTGGVTGYFTVTLYSETPKPSISSSNLNPREVMEAVRLICDPETPDASYLWLLNGQNLPMTHRLQLSKTNRTLYLFGVTKYIAGPYECEIRNPVSASRSDPVTLNLLPKLPMPYITINNLNPREKKDVLAFTCEPKSRNYTYIWWLNGQSLPVSPRVKRPIENRILILPSVTRNETGPYQCEIRDRYGGIRSNPVTLNVLYGPDLPRIYPSFTYYRSGENLDLSCFADSNPPAEYSWTINGKFQLSGQKLFIPQITTNHSGLYACSVRNSATGKEISKSMIVKVSETASPQVTYAGPNTWFQEILLL</sequence>
<comment type="subcellular location">
    <subcellularLocation>
        <location evidence="7">Secreted</location>
    </subcellularLocation>
</comment>
<comment type="alternative products">
    <event type="alternative splicing"/>
    <isoform>
        <id>Q00889-1</id>
        <name>1</name>
        <sequence type="displayed"/>
    </isoform>
    <isoform>
        <id>Q00889-2</id>
        <name>2</name>
        <sequence type="described" ref="VSP_039344"/>
    </isoform>
</comment>
<comment type="developmental stage">
    <text>PSBG are produced in high quantity during pregnancy.</text>
</comment>
<comment type="similarity">
    <text evidence="7">Belongs to the immunoglobulin superfamily. CEA family.</text>
</comment>
<dbReference type="EMBL" id="M33666">
    <property type="protein sequence ID" value="AAA60206.1"/>
    <property type="molecule type" value="mRNA"/>
</dbReference>
<dbReference type="EMBL" id="M31125">
    <property type="protein sequence ID" value="AAA36512.1"/>
    <property type="molecule type" value="mRNA"/>
</dbReference>
<dbReference type="EMBL" id="X17098">
    <property type="protein sequence ID" value="CAA34957.1"/>
    <property type="molecule type" value="mRNA"/>
</dbReference>
<dbReference type="EMBL" id="AC005260">
    <property type="protein sequence ID" value="AAC25619.1"/>
    <property type="molecule type" value="Genomic_DNA"/>
</dbReference>
<dbReference type="EMBL" id="AC005260">
    <property type="protein sequence ID" value="AAC25620.1"/>
    <property type="molecule type" value="Genomic_DNA"/>
</dbReference>
<dbReference type="EMBL" id="BC020652">
    <property type="protein sequence ID" value="AAH20652.1"/>
    <property type="molecule type" value="mRNA"/>
</dbReference>
<dbReference type="EMBL" id="M32621">
    <property type="protein sequence ID" value="AAA60201.1"/>
    <property type="molecule type" value="Genomic_DNA"/>
</dbReference>
<dbReference type="EMBL" id="M32620">
    <property type="protein sequence ID" value="AAA60201.1"/>
    <property type="status" value="JOINED"/>
    <property type="molecule type" value="Genomic_DNA"/>
</dbReference>
<dbReference type="EMBL" id="AH007627">
    <property type="protein sequence ID" value="AAD28501.1"/>
    <property type="molecule type" value="Genomic_DNA"/>
</dbReference>
<dbReference type="EMBL" id="AH002953">
    <property type="protein sequence ID" value="AAA60202.1"/>
    <property type="molecule type" value="Genomic_DNA"/>
</dbReference>
<dbReference type="CCDS" id="CCDS12613.1">
    <molecule id="Q00889-1"/>
</dbReference>
<dbReference type="CCDS" id="CCDS33038.1">
    <molecule id="Q00889-2"/>
</dbReference>
<dbReference type="PIR" id="D33258">
    <property type="entry name" value="D33258"/>
</dbReference>
<dbReference type="RefSeq" id="NP_001027020.1">
    <molecule id="Q00889-2"/>
    <property type="nucleotide sequence ID" value="NM_001031850.4"/>
</dbReference>
<dbReference type="RefSeq" id="NP_002773.1">
    <molecule id="Q00889-1"/>
    <property type="nucleotide sequence ID" value="NM_002782.5"/>
</dbReference>
<dbReference type="SMR" id="Q00889"/>
<dbReference type="BioGRID" id="111650">
    <property type="interactions" value="3"/>
</dbReference>
<dbReference type="FunCoup" id="Q00889">
    <property type="interactions" value="62"/>
</dbReference>
<dbReference type="IntAct" id="Q00889">
    <property type="interactions" value="1"/>
</dbReference>
<dbReference type="MINT" id="Q00889"/>
<dbReference type="STRING" id="9606.ENSP00000292125"/>
<dbReference type="GlyCosmos" id="Q00889">
    <property type="glycosylation" value="7 sites, No reported glycans"/>
</dbReference>
<dbReference type="GlyGen" id="Q00889">
    <property type="glycosylation" value="7 sites"/>
</dbReference>
<dbReference type="iPTMnet" id="Q00889"/>
<dbReference type="PhosphoSitePlus" id="Q00889"/>
<dbReference type="BioMuta" id="PSG6"/>
<dbReference type="DMDM" id="1709853"/>
<dbReference type="jPOST" id="Q00889"/>
<dbReference type="MassIVE" id="Q00889"/>
<dbReference type="PaxDb" id="9606-ENSP00000292125"/>
<dbReference type="PeptideAtlas" id="Q00889"/>
<dbReference type="ProteomicsDB" id="57882">
    <molecule id="Q00889-1"/>
</dbReference>
<dbReference type="ProteomicsDB" id="57883">
    <molecule id="Q00889-2"/>
</dbReference>
<dbReference type="Antibodypedia" id="17548">
    <property type="antibodies" value="165 antibodies from 20 providers"/>
</dbReference>
<dbReference type="DNASU" id="5675"/>
<dbReference type="Ensembl" id="ENST00000187910.7">
    <molecule id="Q00889-2"/>
    <property type="protein sequence ID" value="ENSP00000187910.3"/>
    <property type="gene ID" value="ENSG00000170848.16"/>
</dbReference>
<dbReference type="Ensembl" id="ENST00000292125.6">
    <molecule id="Q00889-1"/>
    <property type="protein sequence ID" value="ENSP00000292125.2"/>
    <property type="gene ID" value="ENSG00000170848.16"/>
</dbReference>
<dbReference type="GeneID" id="5675"/>
<dbReference type="KEGG" id="hsa:5675"/>
<dbReference type="MANE-Select" id="ENST00000187910.7">
    <molecule id="Q00889-2"/>
    <property type="protein sequence ID" value="ENSP00000187910.3"/>
    <property type="RefSeq nucleotide sequence ID" value="NM_001031850.4"/>
    <property type="RefSeq protein sequence ID" value="NP_001027020.1"/>
</dbReference>
<dbReference type="UCSC" id="uc002ovg.3">
    <molecule id="Q00889-1"/>
    <property type="organism name" value="human"/>
</dbReference>
<dbReference type="AGR" id="HGNC:9523"/>
<dbReference type="CTD" id="5675"/>
<dbReference type="DisGeNET" id="5675"/>
<dbReference type="GeneCards" id="PSG6"/>
<dbReference type="HGNC" id="HGNC:9523">
    <property type="gene designation" value="PSG6"/>
</dbReference>
<dbReference type="HPA" id="ENSG00000170848">
    <property type="expression patterns" value="Tissue enriched (placenta)"/>
</dbReference>
<dbReference type="MIM" id="176395">
    <property type="type" value="gene"/>
</dbReference>
<dbReference type="MIM" id="176399">
    <property type="type" value="gene"/>
</dbReference>
<dbReference type="neXtProt" id="NX_Q00889"/>
<dbReference type="OpenTargets" id="ENSG00000170848"/>
<dbReference type="PharmGKB" id="PA33868"/>
<dbReference type="VEuPathDB" id="HostDB:ENSG00000170848"/>
<dbReference type="eggNOG" id="ENOG502RXPD">
    <property type="taxonomic scope" value="Eukaryota"/>
</dbReference>
<dbReference type="GeneTree" id="ENSGT01100000263479"/>
<dbReference type="HOGENOM" id="CLU_024555_2_0_1"/>
<dbReference type="InParanoid" id="Q00889"/>
<dbReference type="OMA" id="NTWSQEI"/>
<dbReference type="OrthoDB" id="9479347at2759"/>
<dbReference type="PAN-GO" id="Q00889">
    <property type="GO annotations" value="5 GO annotations based on evolutionary models"/>
</dbReference>
<dbReference type="PhylomeDB" id="Q00889"/>
<dbReference type="TreeFam" id="TF336859"/>
<dbReference type="PathwayCommons" id="Q00889"/>
<dbReference type="Reactome" id="R-HSA-202733">
    <property type="pathway name" value="Cell surface interactions at the vascular wall"/>
</dbReference>
<dbReference type="SignaLink" id="Q00889"/>
<dbReference type="BioGRID-ORCS" id="5675">
    <property type="hits" value="25 hits in 1041 CRISPR screens"/>
</dbReference>
<dbReference type="ChiTaRS" id="PSG6">
    <property type="organism name" value="human"/>
</dbReference>
<dbReference type="GeneWiki" id="PSG6"/>
<dbReference type="GenomeRNAi" id="5675"/>
<dbReference type="Pharos" id="Q00889">
    <property type="development level" value="Tbio"/>
</dbReference>
<dbReference type="PRO" id="PR:Q00889"/>
<dbReference type="Proteomes" id="UP000005640">
    <property type="component" value="Chromosome 19"/>
</dbReference>
<dbReference type="RNAct" id="Q00889">
    <property type="molecule type" value="protein"/>
</dbReference>
<dbReference type="Bgee" id="ENSG00000170848">
    <property type="expression patterns" value="Expressed in placenta and 27 other cell types or tissues"/>
</dbReference>
<dbReference type="ExpressionAtlas" id="Q00889">
    <property type="expression patterns" value="baseline and differential"/>
</dbReference>
<dbReference type="GO" id="GO:0005576">
    <property type="term" value="C:extracellular region"/>
    <property type="evidence" value="ECO:0000303"/>
    <property type="project" value="UniProtKB"/>
</dbReference>
<dbReference type="GO" id="GO:0007565">
    <property type="term" value="P:female pregnancy"/>
    <property type="evidence" value="ECO:0000304"/>
    <property type="project" value="ProtInc"/>
</dbReference>
<dbReference type="CDD" id="cd20948">
    <property type="entry name" value="IgC2_CEACAM5-like"/>
    <property type="match status" value="1"/>
</dbReference>
<dbReference type="CDD" id="cd05740">
    <property type="entry name" value="IgI_hCEACAM_2_4_6_like"/>
    <property type="match status" value="1"/>
</dbReference>
<dbReference type="CDD" id="cd05774">
    <property type="entry name" value="IgV_CEACAM_D1"/>
    <property type="match status" value="1"/>
</dbReference>
<dbReference type="FunFam" id="2.60.40.10:FF:000340">
    <property type="entry name" value="Carcinoembryonic antigen-related cell adhesion molecule 1"/>
    <property type="match status" value="1"/>
</dbReference>
<dbReference type="FunFam" id="2.60.40.10:FF:000517">
    <property type="entry name" value="Carcinoembryonic antigen-related cell adhesion molecule 1"/>
    <property type="match status" value="1"/>
</dbReference>
<dbReference type="FunFam" id="2.60.40.10:FF:000244">
    <property type="entry name" value="carcinoembryonic antigen-related cell adhesion molecule 16"/>
    <property type="match status" value="2"/>
</dbReference>
<dbReference type="Gene3D" id="2.60.40.10">
    <property type="entry name" value="Immunoglobulins"/>
    <property type="match status" value="4"/>
</dbReference>
<dbReference type="InterPro" id="IPR050831">
    <property type="entry name" value="CEA_cell_adhesion"/>
</dbReference>
<dbReference type="InterPro" id="IPR007110">
    <property type="entry name" value="Ig-like_dom"/>
</dbReference>
<dbReference type="InterPro" id="IPR036179">
    <property type="entry name" value="Ig-like_dom_sf"/>
</dbReference>
<dbReference type="InterPro" id="IPR013783">
    <property type="entry name" value="Ig-like_fold"/>
</dbReference>
<dbReference type="InterPro" id="IPR003599">
    <property type="entry name" value="Ig_sub"/>
</dbReference>
<dbReference type="InterPro" id="IPR003598">
    <property type="entry name" value="Ig_sub2"/>
</dbReference>
<dbReference type="InterPro" id="IPR013106">
    <property type="entry name" value="Ig_V-set"/>
</dbReference>
<dbReference type="PANTHER" id="PTHR44427">
    <property type="entry name" value="CARCINOEMBRYONIC ANTIGEN-RELATED CELL ADHESION MOLECULE 19"/>
    <property type="match status" value="1"/>
</dbReference>
<dbReference type="PANTHER" id="PTHR44427:SF13">
    <property type="entry name" value="PREGNANCY-SPECIFIC BETA-1-GLYCOPROTEIN 4-RELATED"/>
    <property type="match status" value="1"/>
</dbReference>
<dbReference type="Pfam" id="PF13895">
    <property type="entry name" value="Ig_2"/>
    <property type="match status" value="2"/>
</dbReference>
<dbReference type="Pfam" id="PF13927">
    <property type="entry name" value="Ig_3"/>
    <property type="match status" value="1"/>
</dbReference>
<dbReference type="Pfam" id="PF07686">
    <property type="entry name" value="V-set"/>
    <property type="match status" value="1"/>
</dbReference>
<dbReference type="SMART" id="SM00409">
    <property type="entry name" value="IG"/>
    <property type="match status" value="4"/>
</dbReference>
<dbReference type="SMART" id="SM00408">
    <property type="entry name" value="IGc2"/>
    <property type="match status" value="3"/>
</dbReference>
<dbReference type="SUPFAM" id="SSF48726">
    <property type="entry name" value="Immunoglobulin"/>
    <property type="match status" value="4"/>
</dbReference>
<dbReference type="PROSITE" id="PS50835">
    <property type="entry name" value="IG_LIKE"/>
    <property type="match status" value="3"/>
</dbReference>
<accession>Q00889</accession>
<accession>O75244</accession>
<accession>Q15224</accession>
<accession>Q15235</accession>
<accession>Q549K1</accession>
<name>PSG6_HUMAN</name>
<organism>
    <name type="scientific">Homo sapiens</name>
    <name type="common">Human</name>
    <dbReference type="NCBI Taxonomy" id="9606"/>
    <lineage>
        <taxon>Eukaryota</taxon>
        <taxon>Metazoa</taxon>
        <taxon>Chordata</taxon>
        <taxon>Craniata</taxon>
        <taxon>Vertebrata</taxon>
        <taxon>Euteleostomi</taxon>
        <taxon>Mammalia</taxon>
        <taxon>Eutheria</taxon>
        <taxon>Euarchontoglires</taxon>
        <taxon>Primates</taxon>
        <taxon>Haplorrhini</taxon>
        <taxon>Catarrhini</taxon>
        <taxon>Hominidae</taxon>
        <taxon>Homo</taxon>
    </lineage>
</organism>
<proteinExistence type="evidence at protein level"/>
<gene>
    <name type="primary">PSG6</name>
    <name type="synonym">CGM3</name>
    <name type="synonym">PSG10</name>
    <name type="synonym">PSG12</name>
    <name type="synonym">PSGGB</name>
</gene>
<reference key="1">
    <citation type="journal article" date="1989" name="Biochem. Biophys. Res. Commun.">
        <title>cDNA cloning demonstrates the expression of pregnancy-specific glycoprotein genes, a subgroup of the carcinoembryonic antigen gene family, in fetal liver.</title>
        <authorList>
            <person name="Zimmermann W.A."/>
            <person name="Weiss M."/>
            <person name="Thompson J.A."/>
        </authorList>
    </citation>
    <scope>NUCLEOTIDE SEQUENCE [MRNA] (ISOFORM 1)</scope>
    <source>
        <tissue>Liver</tissue>
    </source>
</reference>
<reference key="2">
    <citation type="journal article" date="1990" name="Biochemistry">
        <title>Characterization of cDNAs of the human pregnancy-specific beta-1-glycoprotein family, a new subfamily of the immunoglobulin gene superfamily.</title>
        <authorList>
            <person name="Zheng Q.-X."/>
            <person name="Tease L.A."/>
            <person name="Shupert W.L."/>
            <person name="Chan W.-Y."/>
        </authorList>
    </citation>
    <scope>NUCLEOTIDE SEQUENCE [MRNA] (ISOFORM 2)</scope>
    <scope>VARIANT ASP-85</scope>
</reference>
<reference key="3">
    <citation type="journal article" date="1990" name="Biochemistry">
        <title>Characterization of two new members of the pregnancy-specific beta 1-glycoprotein family from the myeloid cell line KG-1 and suggestion of two distinct classes of transcription unit.</title>
        <authorList>
            <person name="Barnett T.R."/>
            <person name="Pickle W. II"/>
            <person name="Elting J.J."/>
        </authorList>
    </citation>
    <scope>NUCLEOTIDE SEQUENCE [MRNA] (ISOFORM 2)</scope>
    <scope>VARIANT ASP-85</scope>
    <source>
        <tissue>Bone marrow</tissue>
    </source>
</reference>
<reference key="4">
    <citation type="journal article" date="2004" name="Nature">
        <title>The DNA sequence and biology of human chromosome 19.</title>
        <authorList>
            <person name="Grimwood J."/>
            <person name="Gordon L.A."/>
            <person name="Olsen A.S."/>
            <person name="Terry A."/>
            <person name="Schmutz J."/>
            <person name="Lamerdin J.E."/>
            <person name="Hellsten U."/>
            <person name="Goodstein D."/>
            <person name="Couronne O."/>
            <person name="Tran-Gyamfi M."/>
            <person name="Aerts A."/>
            <person name="Altherr M."/>
            <person name="Ashworth L."/>
            <person name="Bajorek E."/>
            <person name="Black S."/>
            <person name="Branscomb E."/>
            <person name="Caenepeel S."/>
            <person name="Carrano A.V."/>
            <person name="Caoile C."/>
            <person name="Chan Y.M."/>
            <person name="Christensen M."/>
            <person name="Cleland C.A."/>
            <person name="Copeland A."/>
            <person name="Dalin E."/>
            <person name="Dehal P."/>
            <person name="Denys M."/>
            <person name="Detter J.C."/>
            <person name="Escobar J."/>
            <person name="Flowers D."/>
            <person name="Fotopulos D."/>
            <person name="Garcia C."/>
            <person name="Georgescu A.M."/>
            <person name="Glavina T."/>
            <person name="Gomez M."/>
            <person name="Gonzales E."/>
            <person name="Groza M."/>
            <person name="Hammon N."/>
            <person name="Hawkins T."/>
            <person name="Haydu L."/>
            <person name="Ho I."/>
            <person name="Huang W."/>
            <person name="Israni S."/>
            <person name="Jett J."/>
            <person name="Kadner K."/>
            <person name="Kimball H."/>
            <person name="Kobayashi A."/>
            <person name="Larionov V."/>
            <person name="Leem S.-H."/>
            <person name="Lopez F."/>
            <person name="Lou Y."/>
            <person name="Lowry S."/>
            <person name="Malfatti S."/>
            <person name="Martinez D."/>
            <person name="McCready P.M."/>
            <person name="Medina C."/>
            <person name="Morgan J."/>
            <person name="Nelson K."/>
            <person name="Nolan M."/>
            <person name="Ovcharenko I."/>
            <person name="Pitluck S."/>
            <person name="Pollard M."/>
            <person name="Popkie A.P."/>
            <person name="Predki P."/>
            <person name="Quan G."/>
            <person name="Ramirez L."/>
            <person name="Rash S."/>
            <person name="Retterer J."/>
            <person name="Rodriguez A."/>
            <person name="Rogers S."/>
            <person name="Salamov A."/>
            <person name="Salazar A."/>
            <person name="She X."/>
            <person name="Smith D."/>
            <person name="Slezak T."/>
            <person name="Solovyev V."/>
            <person name="Thayer N."/>
            <person name="Tice H."/>
            <person name="Tsai M."/>
            <person name="Ustaszewska A."/>
            <person name="Vo N."/>
            <person name="Wagner M."/>
            <person name="Wheeler J."/>
            <person name="Wu K."/>
            <person name="Xie G."/>
            <person name="Yang J."/>
            <person name="Dubchak I."/>
            <person name="Furey T.S."/>
            <person name="DeJong P."/>
            <person name="Dickson M."/>
            <person name="Gordon D."/>
            <person name="Eichler E.E."/>
            <person name="Pennacchio L.A."/>
            <person name="Richardson P."/>
            <person name="Stubbs L."/>
            <person name="Rokhsar D.S."/>
            <person name="Myers R.M."/>
            <person name="Rubin E.M."/>
            <person name="Lucas S.M."/>
        </authorList>
    </citation>
    <scope>NUCLEOTIDE SEQUENCE [LARGE SCALE GENOMIC DNA]</scope>
</reference>
<reference key="5">
    <citation type="journal article" date="2004" name="Genome Res.">
        <title>The status, quality, and expansion of the NIH full-length cDNA project: the Mammalian Gene Collection (MGC).</title>
        <authorList>
            <consortium name="The MGC Project Team"/>
        </authorList>
    </citation>
    <scope>NUCLEOTIDE SEQUENCE [LARGE SCALE MRNA] (ISOFORM 2)</scope>
    <source>
        <tissue>Placenta</tissue>
    </source>
</reference>
<reference key="6">
    <citation type="journal article" date="1990" name="Biochem. Biophys. Res. Commun.">
        <title>The human pregnancy-specific glycoprotein genes are tightly linked on the long arm of chromosome 19 and are coordinately expressed.</title>
        <authorList>
            <person name="Thompson J."/>
            <person name="Koumari R."/>
            <person name="Wagner K."/>
            <person name="Barnert S."/>
            <person name="Schleussner C."/>
            <person name="Schrewe H."/>
            <person name="Zimmermann W."/>
            <person name="Mueller G."/>
            <person name="Schempp W."/>
            <person name="Zaninetta D."/>
            <person name="Ammaturo D."/>
            <person name="Hardman N."/>
        </authorList>
    </citation>
    <scope>NUCLEOTIDE SEQUENCE [GENOMIC DNA] OF 1-142</scope>
</reference>
<reference key="7">
    <citation type="journal article" date="2000" name="Tumor Biol.">
        <title>Evolution of the carcinoembryonic antigen family. structures of CGM9, CGM11 and pregnancy-specific glycoprotein promoters.</title>
        <authorList>
            <person name="Fraengsmyr L."/>
            <person name="Israelsson A."/>
            <person name="Teglund S."/>
            <person name="Matsunaga T."/>
            <person name="Hammarstroem S."/>
        </authorList>
    </citation>
    <scope>NUCLEOTIDE SEQUENCE [GENOMIC DNA] OF 1-142</scope>
</reference>
<reference key="8">
    <citation type="journal article" date="1989" name="Biochem. Biophys. Res. Commun.">
        <title>Analysis of the size of the carcinoembryonic antigen (CEA) gene family: isolation and sequencing of N-terminal domain exons.</title>
        <authorList>
            <person name="Thompson J.A."/>
            <person name="Mauch E.-M."/>
            <person name="Chen F.-S."/>
            <person name="Hinoda Y."/>
            <person name="Schrewe H."/>
            <person name="Berling B."/>
            <person name="Barnert S."/>
            <person name="von Kleist S."/>
            <person name="Shively J.E."/>
            <person name="Zimmermann W."/>
        </authorList>
    </citation>
    <scope>NUCLEOTIDE SEQUENCE [GENOMIC DNA] OF 23-142</scope>
</reference>
<reference key="9">
    <citation type="journal article" date="1990" name="Proc. Natl. Acad. Sci. U.S.A.">
        <title>Linkage of two human pregnancy-specific beta 1-glycoprotein genes: one is associated with hydatidiform mole.</title>
        <authorList>
            <person name="Leslie K.K."/>
            <person name="Watanabe S."/>
            <person name="Lei K.-J."/>
            <person name="Chou D.Y."/>
            <person name="Plouzek C.A."/>
            <person name="Deng H.-C."/>
            <person name="Torres J."/>
            <person name="Chou J.Y."/>
        </authorList>
    </citation>
    <scope>NUCLEOTIDE SEQUENCE [GENOMIC DNA] OF 1-142</scope>
</reference>
<evidence type="ECO:0000255" key="1"/>
<evidence type="ECO:0000269" key="2">
    <source>
    </source>
</evidence>
<evidence type="ECO:0000269" key="3">
    <source>
    </source>
</evidence>
<evidence type="ECO:0000303" key="4">
    <source>
    </source>
</evidence>
<evidence type="ECO:0000303" key="5">
    <source>
    </source>
</evidence>
<evidence type="ECO:0000303" key="6">
    <source>
    </source>
</evidence>
<evidence type="ECO:0000305" key="7"/>
<keyword id="KW-0025">Alternative splicing</keyword>
<keyword id="KW-1015">Disulfide bond</keyword>
<keyword id="KW-0325">Glycoprotein</keyword>
<keyword id="KW-0393">Immunoglobulin domain</keyword>
<keyword id="KW-1267">Proteomics identification</keyword>
<keyword id="KW-1185">Reference proteome</keyword>
<keyword id="KW-0677">Repeat</keyword>
<keyword id="KW-0964">Secreted</keyword>
<keyword id="KW-0732">Signal</keyword>